<protein>
    <recommendedName>
        <fullName>Quinol oxidase subunit 2</fullName>
        <ecNumber>1.10.3.-</ecNumber>
    </recommendedName>
    <alternativeName>
        <fullName>Oxidase aa(3)-600 subunit 2</fullName>
    </alternativeName>
    <alternativeName>
        <fullName>Quinol oxidase aa3-600, subunit QoxA</fullName>
    </alternativeName>
    <alternativeName>
        <fullName>Quinol oxidase polypeptide II</fullName>
    </alternativeName>
</protein>
<evidence type="ECO:0000250" key="1"/>
<evidence type="ECO:0000255" key="2"/>
<evidence type="ECO:0000255" key="3">
    <source>
        <dbReference type="PROSITE-ProRule" id="PRU00303"/>
    </source>
</evidence>
<evidence type="ECO:0000256" key="4">
    <source>
        <dbReference type="SAM" id="MobiDB-lite"/>
    </source>
</evidence>
<evidence type="ECO:0000269" key="5">
    <source>
    </source>
</evidence>
<evidence type="ECO:0000269" key="6">
    <source>
    </source>
</evidence>
<evidence type="ECO:0000305" key="7"/>
<accession>P34957</accession>
<accession>O32281</accession>
<name>QOX2_BACSU</name>
<organism>
    <name type="scientific">Bacillus subtilis (strain 168)</name>
    <dbReference type="NCBI Taxonomy" id="224308"/>
    <lineage>
        <taxon>Bacteria</taxon>
        <taxon>Bacillati</taxon>
        <taxon>Bacillota</taxon>
        <taxon>Bacilli</taxon>
        <taxon>Bacillales</taxon>
        <taxon>Bacillaceae</taxon>
        <taxon>Bacillus</taxon>
    </lineage>
</organism>
<proteinExistence type="evidence at protein level"/>
<reference key="1">
    <citation type="journal article" date="1992" name="J. Biol. Chem.">
        <title>Molecular cloning, sequencing, and physiological characterization of the qox operon from Bacillus subtilis encoding the aa3-600 quinol oxidase.</title>
        <authorList>
            <person name="Santana M."/>
            <person name="Kunst F."/>
            <person name="Hullo M.-F."/>
            <person name="Rapoport G."/>
            <person name="Danchin A."/>
            <person name="Glaser P."/>
        </authorList>
    </citation>
    <scope>NUCLEOTIDE SEQUENCE [GENOMIC DNA]</scope>
    <source>
        <strain>168</strain>
    </source>
</reference>
<reference key="2">
    <citation type="journal article" date="1993" name="Mol. Microbiol.">
        <title>Bacillus subtilis genome project: cloning and sequencing of the 97 kb region from 325 degrees to 333 degrees.</title>
        <authorList>
            <person name="Glaser P."/>
            <person name="Kunst F."/>
            <person name="Arnaud M."/>
            <person name="Coudart M.P."/>
            <person name="Gonzales W."/>
            <person name="Hullo M.-F."/>
            <person name="Ionescu M."/>
            <person name="Lubochinsky B."/>
            <person name="Marcelino L."/>
            <person name="Moszer I."/>
            <person name="Presecan E."/>
            <person name="Santana M."/>
            <person name="Schneider E."/>
            <person name="Schweizer J."/>
            <person name="Vertes A."/>
            <person name="Rapoport G."/>
            <person name="Danchin A."/>
        </authorList>
    </citation>
    <scope>NUCLEOTIDE SEQUENCE [GENOMIC DNA]</scope>
    <source>
        <strain>168</strain>
    </source>
</reference>
<reference key="3">
    <citation type="journal article" date="1997" name="Nature">
        <title>The complete genome sequence of the Gram-positive bacterium Bacillus subtilis.</title>
        <authorList>
            <person name="Kunst F."/>
            <person name="Ogasawara N."/>
            <person name="Moszer I."/>
            <person name="Albertini A.M."/>
            <person name="Alloni G."/>
            <person name="Azevedo V."/>
            <person name="Bertero M.G."/>
            <person name="Bessieres P."/>
            <person name="Bolotin A."/>
            <person name="Borchert S."/>
            <person name="Borriss R."/>
            <person name="Boursier L."/>
            <person name="Brans A."/>
            <person name="Braun M."/>
            <person name="Brignell S.C."/>
            <person name="Bron S."/>
            <person name="Brouillet S."/>
            <person name="Bruschi C.V."/>
            <person name="Caldwell B."/>
            <person name="Capuano V."/>
            <person name="Carter N.M."/>
            <person name="Choi S.-K."/>
            <person name="Codani J.-J."/>
            <person name="Connerton I.F."/>
            <person name="Cummings N.J."/>
            <person name="Daniel R.A."/>
            <person name="Denizot F."/>
            <person name="Devine K.M."/>
            <person name="Duesterhoeft A."/>
            <person name="Ehrlich S.D."/>
            <person name="Emmerson P.T."/>
            <person name="Entian K.-D."/>
            <person name="Errington J."/>
            <person name="Fabret C."/>
            <person name="Ferrari E."/>
            <person name="Foulger D."/>
            <person name="Fritz C."/>
            <person name="Fujita M."/>
            <person name="Fujita Y."/>
            <person name="Fuma S."/>
            <person name="Galizzi A."/>
            <person name="Galleron N."/>
            <person name="Ghim S.-Y."/>
            <person name="Glaser P."/>
            <person name="Goffeau A."/>
            <person name="Golightly E.J."/>
            <person name="Grandi G."/>
            <person name="Guiseppi G."/>
            <person name="Guy B.J."/>
            <person name="Haga K."/>
            <person name="Haiech J."/>
            <person name="Harwood C.R."/>
            <person name="Henaut A."/>
            <person name="Hilbert H."/>
            <person name="Holsappel S."/>
            <person name="Hosono S."/>
            <person name="Hullo M.-F."/>
            <person name="Itaya M."/>
            <person name="Jones L.-M."/>
            <person name="Joris B."/>
            <person name="Karamata D."/>
            <person name="Kasahara Y."/>
            <person name="Klaerr-Blanchard M."/>
            <person name="Klein C."/>
            <person name="Kobayashi Y."/>
            <person name="Koetter P."/>
            <person name="Koningstein G."/>
            <person name="Krogh S."/>
            <person name="Kumano M."/>
            <person name="Kurita K."/>
            <person name="Lapidus A."/>
            <person name="Lardinois S."/>
            <person name="Lauber J."/>
            <person name="Lazarevic V."/>
            <person name="Lee S.-M."/>
            <person name="Levine A."/>
            <person name="Liu H."/>
            <person name="Masuda S."/>
            <person name="Mauel C."/>
            <person name="Medigue C."/>
            <person name="Medina N."/>
            <person name="Mellado R.P."/>
            <person name="Mizuno M."/>
            <person name="Moestl D."/>
            <person name="Nakai S."/>
            <person name="Noback M."/>
            <person name="Noone D."/>
            <person name="O'Reilly M."/>
            <person name="Ogawa K."/>
            <person name="Ogiwara A."/>
            <person name="Oudega B."/>
            <person name="Park S.-H."/>
            <person name="Parro V."/>
            <person name="Pohl T.M."/>
            <person name="Portetelle D."/>
            <person name="Porwollik S."/>
            <person name="Prescott A.M."/>
            <person name="Presecan E."/>
            <person name="Pujic P."/>
            <person name="Purnelle B."/>
            <person name="Rapoport G."/>
            <person name="Rey M."/>
            <person name="Reynolds S."/>
            <person name="Rieger M."/>
            <person name="Rivolta C."/>
            <person name="Rocha E."/>
            <person name="Roche B."/>
            <person name="Rose M."/>
            <person name="Sadaie Y."/>
            <person name="Sato T."/>
            <person name="Scanlan E."/>
            <person name="Schleich S."/>
            <person name="Schroeter R."/>
            <person name="Scoffone F."/>
            <person name="Sekiguchi J."/>
            <person name="Sekowska A."/>
            <person name="Seror S.J."/>
            <person name="Serror P."/>
            <person name="Shin B.-S."/>
            <person name="Soldo B."/>
            <person name="Sorokin A."/>
            <person name="Tacconi E."/>
            <person name="Takagi T."/>
            <person name="Takahashi H."/>
            <person name="Takemaru K."/>
            <person name="Takeuchi M."/>
            <person name="Tamakoshi A."/>
            <person name="Tanaka T."/>
            <person name="Terpstra P."/>
            <person name="Tognoni A."/>
            <person name="Tosato V."/>
            <person name="Uchiyama S."/>
            <person name="Vandenbol M."/>
            <person name="Vannier F."/>
            <person name="Vassarotti A."/>
            <person name="Viari A."/>
            <person name="Wambutt R."/>
            <person name="Wedler E."/>
            <person name="Wedler H."/>
            <person name="Weitzenegger T."/>
            <person name="Winters P."/>
            <person name="Wipat A."/>
            <person name="Yamamoto H."/>
            <person name="Yamane K."/>
            <person name="Yasumoto K."/>
            <person name="Yata K."/>
            <person name="Yoshida K."/>
            <person name="Yoshikawa H.-F."/>
            <person name="Zumstein E."/>
            <person name="Yoshikawa H."/>
            <person name="Danchin A."/>
        </authorList>
    </citation>
    <scope>NUCLEOTIDE SEQUENCE [LARGE SCALE GENOMIC DNA]</scope>
    <source>
        <strain>168</strain>
    </source>
</reference>
<reference key="4">
    <citation type="journal article" date="2009" name="Microbiology">
        <title>From a consortium sequence to a unified sequence: the Bacillus subtilis 168 reference genome a decade later.</title>
        <authorList>
            <person name="Barbe V."/>
            <person name="Cruveiller S."/>
            <person name="Kunst F."/>
            <person name="Lenoble P."/>
            <person name="Meurice G."/>
            <person name="Sekowska A."/>
            <person name="Vallenet D."/>
            <person name="Wang T."/>
            <person name="Moszer I."/>
            <person name="Medigue C."/>
            <person name="Danchin A."/>
        </authorList>
    </citation>
    <scope>SEQUENCE REVISION TO 38; 167 AND 300</scope>
</reference>
<reference key="5">
    <citation type="journal article" date="2012" name="Mol. Microbiol.">
        <title>The biofilm formation defect of a Bacillus subtilis flotillin-defective mutant involves the protease FtsH.</title>
        <authorList>
            <person name="Yepes A."/>
            <person name="Schneider J."/>
            <person name="Mielich B."/>
            <person name="Koch G."/>
            <person name="Garcia-Betancur J.C."/>
            <person name="Ramamurthi K.S."/>
            <person name="Vlamakis H."/>
            <person name="Lopez D."/>
        </authorList>
    </citation>
    <scope>IDENTIFICATION BY MASS SPECTROMETRY</scope>
    <scope>SUBCELLULAR LOCATION</scope>
    <source>
        <strain>168 / Marburg / ATCC 6051 / DSM 10 / JCM 1465 / NBRC 13719 / NCIMB 3610 / NRRL NRS-744 / VKM B-501</strain>
    </source>
</reference>
<reference key="6">
    <citation type="journal article" date="2013" name="Mol. Microbiol.">
        <title>Flotillins functionally organize the bacterial membrane.</title>
        <authorList>
            <person name="Bach J.N."/>
            <person name="Bramkamp M."/>
        </authorList>
    </citation>
    <scope>IDENTIFICATION BY MASS SPECTROMETRY</scope>
    <scope>INTERACTION WITH FLOT</scope>
    <scope>SUBCELLULAR LOCATION</scope>
    <source>
        <strain>168</strain>
    </source>
</reference>
<keyword id="KW-0002">3D-structure</keyword>
<keyword id="KW-1003">Cell membrane</keyword>
<keyword id="KW-0249">Electron transport</keyword>
<keyword id="KW-0449">Lipoprotein</keyword>
<keyword id="KW-0472">Membrane</keyword>
<keyword id="KW-0560">Oxidoreductase</keyword>
<keyword id="KW-0564">Palmitate</keyword>
<keyword id="KW-1185">Reference proteome</keyword>
<keyword id="KW-0679">Respiratory chain</keyword>
<keyword id="KW-0732">Signal</keyword>
<keyword id="KW-0812">Transmembrane</keyword>
<keyword id="KW-1133">Transmembrane helix</keyword>
<keyword id="KW-0813">Transport</keyword>
<feature type="signal peptide" evidence="3">
    <location>
        <begin position="1"/>
        <end position="25"/>
    </location>
</feature>
<feature type="chain" id="PRO_0000006069" description="Quinol oxidase subunit 2">
    <location>
        <begin position="26"/>
        <end position="321"/>
    </location>
</feature>
<feature type="transmembrane region" description="Helical" evidence="2">
    <location>
        <begin position="49"/>
        <end position="69"/>
    </location>
</feature>
<feature type="transmembrane region" description="Helical" evidence="2">
    <location>
        <begin position="90"/>
        <end position="110"/>
    </location>
</feature>
<feature type="region of interest" description="Disordered" evidence="4">
    <location>
        <begin position="294"/>
        <end position="321"/>
    </location>
</feature>
<feature type="compositionally biased region" description="Basic and acidic residues" evidence="4">
    <location>
        <begin position="300"/>
        <end position="321"/>
    </location>
</feature>
<feature type="lipid moiety-binding region" description="N-palmitoyl cysteine" evidence="3">
    <location>
        <position position="26"/>
    </location>
</feature>
<feature type="lipid moiety-binding region" description="S-diacylglycerol cysteine" evidence="3">
    <location>
        <position position="26"/>
    </location>
</feature>
<feature type="sequence conflict" description="In Ref. 1; AAA22686 and 2; CAA51593." evidence="7" ref="1 2">
    <original>V</original>
    <variation>VD</variation>
    <location>
        <position position="38"/>
    </location>
</feature>
<feature type="sequence conflict" description="In Ref. 1; AAA22686 and 2; CAA51593." evidence="7" ref="1 2">
    <original>F</original>
    <variation>C</variation>
    <location>
        <position position="167"/>
    </location>
</feature>
<feature type="sequence conflict" description="In Ref. 1; AAA22686 and 2; CAA51593." evidence="7" ref="1 2">
    <original>S</original>
    <variation>C</variation>
    <location>
        <position position="300"/>
    </location>
</feature>
<gene>
    <name type="primary">qoxA</name>
    <name type="ordered locus">BSU38170</name>
    <name type="ORF">ipa-37d</name>
</gene>
<dbReference type="EC" id="1.10.3.-"/>
<dbReference type="EMBL" id="M86548">
    <property type="protein sequence ID" value="AAA22686.1"/>
    <property type="status" value="ALT_INIT"/>
    <property type="molecule type" value="Genomic_DNA"/>
</dbReference>
<dbReference type="EMBL" id="X73124">
    <property type="protein sequence ID" value="CAA51593.1"/>
    <property type="molecule type" value="Genomic_DNA"/>
</dbReference>
<dbReference type="EMBL" id="AL009126">
    <property type="protein sequence ID" value="CAB15843.2"/>
    <property type="molecule type" value="Genomic_DNA"/>
</dbReference>
<dbReference type="PIR" id="E69687">
    <property type="entry name" value="E69687"/>
</dbReference>
<dbReference type="RefSeq" id="NP_391696.2">
    <property type="nucleotide sequence ID" value="NC_000964.3"/>
</dbReference>
<dbReference type="RefSeq" id="WP_010886637.1">
    <property type="nucleotide sequence ID" value="NZ_OZ025638.1"/>
</dbReference>
<dbReference type="PDB" id="6KOB">
    <property type="method" value="X-ray"/>
    <property type="resolution" value="3.60 A"/>
    <property type="chains" value="B/F=26-321"/>
</dbReference>
<dbReference type="PDB" id="6KOC">
    <property type="method" value="X-ray"/>
    <property type="resolution" value="3.80 A"/>
    <property type="chains" value="B/F=26-321"/>
</dbReference>
<dbReference type="PDB" id="6KOE">
    <property type="method" value="X-ray"/>
    <property type="resolution" value="3.75 A"/>
    <property type="chains" value="B/F=26-321"/>
</dbReference>
<dbReference type="PDBsum" id="6KOB"/>
<dbReference type="PDBsum" id="6KOC"/>
<dbReference type="PDBsum" id="6KOE"/>
<dbReference type="SMR" id="P34957"/>
<dbReference type="FunCoup" id="P34957">
    <property type="interactions" value="88"/>
</dbReference>
<dbReference type="STRING" id="224308.BSU38170"/>
<dbReference type="jPOST" id="P34957"/>
<dbReference type="PaxDb" id="224308-BSU38170"/>
<dbReference type="EnsemblBacteria" id="CAB15843">
    <property type="protein sequence ID" value="CAB15843"/>
    <property type="gene ID" value="BSU_38170"/>
</dbReference>
<dbReference type="GeneID" id="86871556"/>
<dbReference type="GeneID" id="937295"/>
<dbReference type="KEGG" id="bsu:BSU38170"/>
<dbReference type="PATRIC" id="fig|224308.43.peg.4001"/>
<dbReference type="eggNOG" id="COG1622">
    <property type="taxonomic scope" value="Bacteria"/>
</dbReference>
<dbReference type="InParanoid" id="P34957"/>
<dbReference type="OrthoDB" id="9783445at2"/>
<dbReference type="PhylomeDB" id="P34957"/>
<dbReference type="BioCyc" id="BSUB:BSU38170-MONOMER"/>
<dbReference type="BioCyc" id="MetaCyc:BSU38170-MONOMER"/>
<dbReference type="Proteomes" id="UP000001570">
    <property type="component" value="Chromosome"/>
</dbReference>
<dbReference type="GO" id="GO:0045121">
    <property type="term" value="C:membrane raft"/>
    <property type="evidence" value="ECO:0007669"/>
    <property type="project" value="UniProtKB-SubCell"/>
</dbReference>
<dbReference type="GO" id="GO:0005886">
    <property type="term" value="C:plasma membrane"/>
    <property type="evidence" value="ECO:0007669"/>
    <property type="project" value="UniProtKB-SubCell"/>
</dbReference>
<dbReference type="GO" id="GO:0005507">
    <property type="term" value="F:copper ion binding"/>
    <property type="evidence" value="ECO:0007669"/>
    <property type="project" value="InterPro"/>
</dbReference>
<dbReference type="GO" id="GO:0009486">
    <property type="term" value="F:cytochrome bo3 ubiquinol oxidase activity"/>
    <property type="evidence" value="ECO:0007669"/>
    <property type="project" value="InterPro"/>
</dbReference>
<dbReference type="GO" id="GO:0004129">
    <property type="term" value="F:cytochrome-c oxidase activity"/>
    <property type="evidence" value="ECO:0007669"/>
    <property type="project" value="InterPro"/>
</dbReference>
<dbReference type="GO" id="GO:0016682">
    <property type="term" value="F:oxidoreductase activity, acting on diphenols and related substances as donors, oxygen as acceptor"/>
    <property type="evidence" value="ECO:0000250"/>
    <property type="project" value="UniProtKB"/>
</dbReference>
<dbReference type="GO" id="GO:0042773">
    <property type="term" value="P:ATP synthesis coupled electron transport"/>
    <property type="evidence" value="ECO:0000250"/>
    <property type="project" value="UniProtKB"/>
</dbReference>
<dbReference type="CDD" id="cd04212">
    <property type="entry name" value="CuRO_UO_II"/>
    <property type="match status" value="1"/>
</dbReference>
<dbReference type="FunFam" id="2.60.40.420:FF:000014">
    <property type="entry name" value="Quinol oxidase subunit 2"/>
    <property type="match status" value="1"/>
</dbReference>
<dbReference type="Gene3D" id="1.10.287.90">
    <property type="match status" value="1"/>
</dbReference>
<dbReference type="Gene3D" id="2.60.40.420">
    <property type="entry name" value="Cupredoxins - blue copper proteins"/>
    <property type="match status" value="1"/>
</dbReference>
<dbReference type="InterPro" id="IPR045187">
    <property type="entry name" value="CcO_II"/>
</dbReference>
<dbReference type="InterPro" id="IPR002429">
    <property type="entry name" value="CcO_II-like_C"/>
</dbReference>
<dbReference type="InterPro" id="IPR008972">
    <property type="entry name" value="Cupredoxin"/>
</dbReference>
<dbReference type="InterPro" id="IPR034227">
    <property type="entry name" value="CuRO_UO_II"/>
</dbReference>
<dbReference type="InterPro" id="IPR011759">
    <property type="entry name" value="Cyt_c_oxidase_su2_TM_dom"/>
</dbReference>
<dbReference type="InterPro" id="IPR036257">
    <property type="entry name" value="Cyt_c_oxidase_su2_TM_sf"/>
</dbReference>
<dbReference type="InterPro" id="IPR006333">
    <property type="entry name" value="Cyt_o_ubiquinol_oxidase_su2"/>
</dbReference>
<dbReference type="InterPro" id="IPR006332">
    <property type="entry name" value="QoxA"/>
</dbReference>
<dbReference type="NCBIfam" id="TIGR01432">
    <property type="entry name" value="QOXA"/>
    <property type="match status" value="1"/>
</dbReference>
<dbReference type="PANTHER" id="PTHR22888:SF18">
    <property type="entry name" value="CYTOCHROME BO(3) UBIQUINOL OXIDASE SUBUNIT 2"/>
    <property type="match status" value="1"/>
</dbReference>
<dbReference type="PANTHER" id="PTHR22888">
    <property type="entry name" value="CYTOCHROME C OXIDASE, SUBUNIT II"/>
    <property type="match status" value="1"/>
</dbReference>
<dbReference type="Pfam" id="PF00116">
    <property type="entry name" value="COX2"/>
    <property type="match status" value="1"/>
</dbReference>
<dbReference type="Pfam" id="PF02790">
    <property type="entry name" value="COX2_TM"/>
    <property type="match status" value="1"/>
</dbReference>
<dbReference type="PIRSF" id="PIRSF000292">
    <property type="entry name" value="Ubi_od_II"/>
    <property type="match status" value="1"/>
</dbReference>
<dbReference type="SUPFAM" id="SSF49503">
    <property type="entry name" value="Cupredoxins"/>
    <property type="match status" value="1"/>
</dbReference>
<dbReference type="SUPFAM" id="SSF81464">
    <property type="entry name" value="Cytochrome c oxidase subunit II-like, transmembrane region"/>
    <property type="match status" value="1"/>
</dbReference>
<dbReference type="PROSITE" id="PS50857">
    <property type="entry name" value="COX2_CUA"/>
    <property type="match status" value="1"/>
</dbReference>
<dbReference type="PROSITE" id="PS50999">
    <property type="entry name" value="COX2_TM"/>
    <property type="match status" value="1"/>
</dbReference>
<dbReference type="PROSITE" id="PS51257">
    <property type="entry name" value="PROKAR_LIPOPROTEIN"/>
    <property type="match status" value="1"/>
</dbReference>
<sequence>MIFLFRALKPLLVLALLTVVFVLGGCSNASVLDPKGPVAEQQSDLILLSIGFMLFIVGVVFVLFTIILVKYRDRKGKDNGSYNPEIHGNTFLEVVWTVIPILIVIALSVPTVQTIYSLEKAPEATKDKEPLVVYATSVDWKWVFSYPEQDIETVNYLNIPVDRPILFKISSADSMASLWIPQLGGQKYAMAGMLMDQYLQADKVGTYEGRNANFTGEHFADQEFDVNAVTEKDFNSWVKKTQNEAPKLTKEKYDELMLPENVDELTFSSTHLKYVDHGQDAEYAMEARKRLGYQAVSPHSKTDPFENVKKNEFKKSDDTEE</sequence>
<comment type="function">
    <text evidence="1">Catalyzes quinol oxidation with the concomitant reduction of oxygen to water. Major component for energy conversion during vegetative growth. Subunit II transfers the electrons from a quinol to the binuclear center of the catalytic subunit I (By similarity).</text>
</comment>
<comment type="catalytic activity">
    <reaction>
        <text>2 a quinol + O2 = 2 a quinone + 2 H2O</text>
        <dbReference type="Rhea" id="RHEA:55376"/>
        <dbReference type="ChEBI" id="CHEBI:15377"/>
        <dbReference type="ChEBI" id="CHEBI:15379"/>
        <dbReference type="ChEBI" id="CHEBI:24646"/>
        <dbReference type="ChEBI" id="CHEBI:132124"/>
    </reaction>
</comment>
<comment type="subunit">
    <text evidence="6">Interacts with FloT.</text>
</comment>
<comment type="subcellular location">
    <subcellularLocation>
        <location evidence="3 5 6">Cell membrane</location>
        <topology evidence="2">Multi-pass membrane protein</topology>
    </subcellularLocation>
    <subcellularLocation>
        <location evidence="5 6">Membrane raft</location>
        <topology evidence="2">Multi-pass membrane protein</topology>
    </subcellularLocation>
    <text evidence="5 6">Present in detergent-resistant membrane (DRM) fractions that may be equivalent to eukaryotic membrane rafts; these rafts include proteins involved in signaling, molecule trafficking and protein secretion.</text>
</comment>
<comment type="similarity">
    <text evidence="7">Belongs to the cytochrome c oxidase subunit 2 family.</text>
</comment>
<comment type="sequence caution" evidence="7">
    <conflict type="erroneous initiation">
        <sequence resource="EMBL-CDS" id="AAA22686"/>
    </conflict>
    <text>Extended N-terminus.</text>
</comment>